<keyword id="KW-0903">Direct protein sequencing</keyword>
<keyword id="KW-1015">Disulfide bond</keyword>
<keyword id="KW-0325">Glycoprotein</keyword>
<keyword id="KW-0372">Hormone</keyword>
<keyword id="KW-0964">Secreted</keyword>
<keyword id="KW-0732">Signal</keyword>
<gene>
    <name type="primary">tshb</name>
</gene>
<name>TSHB_ANGAN</name>
<protein>
    <recommendedName>
        <fullName>Thyrotropin subunit beta</fullName>
    </recommendedName>
    <alternativeName>
        <fullName>Thyroid-stimulating hormone subunit beta</fullName>
        <shortName>TSH-B</shortName>
        <shortName>TSH-beta</shortName>
    </alternativeName>
    <alternativeName>
        <fullName>Thyrotropin beta chain</fullName>
    </alternativeName>
</protein>
<sequence length="147" mass="16156">MRVVLLASAVLCLLAGQVLSICSPVDYTLYVEKPECDFCVAINTTICMGFCYSLDPNVVGPAVKRLVVQRGCTYQAVEYRTAELPGCPPHVDPRFSYPVALHCTCRACDPARDECTHRASADGDRCSKPLLLHMHAYPGQSNYIQTL</sequence>
<dbReference type="EMBL" id="X73493">
    <property type="protein sequence ID" value="CAA51908.1"/>
    <property type="molecule type" value="mRNA"/>
</dbReference>
<dbReference type="PIR" id="S34148">
    <property type="entry name" value="S34148"/>
</dbReference>
<dbReference type="SMR" id="Q08127"/>
<dbReference type="GlyCosmos" id="Q08127">
    <property type="glycosylation" value="1 site, No reported glycans"/>
</dbReference>
<dbReference type="GO" id="GO:0005737">
    <property type="term" value="C:cytoplasm"/>
    <property type="evidence" value="ECO:0007669"/>
    <property type="project" value="TreeGrafter"/>
</dbReference>
<dbReference type="GO" id="GO:0005615">
    <property type="term" value="C:extracellular space"/>
    <property type="evidence" value="ECO:0007669"/>
    <property type="project" value="TreeGrafter"/>
</dbReference>
<dbReference type="GO" id="GO:0005179">
    <property type="term" value="F:hormone activity"/>
    <property type="evidence" value="ECO:0007669"/>
    <property type="project" value="UniProtKB-KW"/>
</dbReference>
<dbReference type="GO" id="GO:0007186">
    <property type="term" value="P:G protein-coupled receptor signaling pathway"/>
    <property type="evidence" value="ECO:0007669"/>
    <property type="project" value="TreeGrafter"/>
</dbReference>
<dbReference type="CDD" id="cd00069">
    <property type="entry name" value="GHB_like"/>
    <property type="match status" value="1"/>
</dbReference>
<dbReference type="FunFam" id="2.10.90.10:FF:000007">
    <property type="entry name" value="Luteinizing hormone beta subunit"/>
    <property type="match status" value="1"/>
</dbReference>
<dbReference type="Gene3D" id="2.10.90.10">
    <property type="entry name" value="Cystine-knot cytokines"/>
    <property type="match status" value="1"/>
</dbReference>
<dbReference type="InterPro" id="IPR029034">
    <property type="entry name" value="Cystine-knot_cytokine"/>
</dbReference>
<dbReference type="InterPro" id="IPR006208">
    <property type="entry name" value="Glyco_hormone_CN"/>
</dbReference>
<dbReference type="InterPro" id="IPR001545">
    <property type="entry name" value="Gonadotropin_bsu"/>
</dbReference>
<dbReference type="InterPro" id="IPR018245">
    <property type="entry name" value="Gonadotropin_bsu_CS"/>
</dbReference>
<dbReference type="PANTHER" id="PTHR11515">
    <property type="entry name" value="GLYCOPROTEIN HORMONE BETA CHAIN"/>
    <property type="match status" value="1"/>
</dbReference>
<dbReference type="PANTHER" id="PTHR11515:SF5">
    <property type="entry name" value="THYROTROPIN SUBUNIT BETA"/>
    <property type="match status" value="1"/>
</dbReference>
<dbReference type="Pfam" id="PF00007">
    <property type="entry name" value="Cys_knot"/>
    <property type="match status" value="1"/>
</dbReference>
<dbReference type="SMART" id="SM00068">
    <property type="entry name" value="GHB"/>
    <property type="match status" value="1"/>
</dbReference>
<dbReference type="SUPFAM" id="SSF57501">
    <property type="entry name" value="Cystine-knot cytokines"/>
    <property type="match status" value="1"/>
</dbReference>
<dbReference type="PROSITE" id="PS00261">
    <property type="entry name" value="GLYCO_HORMONE_BETA_1"/>
    <property type="match status" value="1"/>
</dbReference>
<dbReference type="PROSITE" id="PS00689">
    <property type="entry name" value="GLYCO_HORMONE_BETA_2"/>
    <property type="match status" value="1"/>
</dbReference>
<organism>
    <name type="scientific">Anguilla anguilla</name>
    <name type="common">European freshwater eel</name>
    <name type="synonym">Muraena anguilla</name>
    <dbReference type="NCBI Taxonomy" id="7936"/>
    <lineage>
        <taxon>Eukaryota</taxon>
        <taxon>Metazoa</taxon>
        <taxon>Chordata</taxon>
        <taxon>Craniata</taxon>
        <taxon>Vertebrata</taxon>
        <taxon>Euteleostomi</taxon>
        <taxon>Actinopterygii</taxon>
        <taxon>Neopterygii</taxon>
        <taxon>Teleostei</taxon>
        <taxon>Anguilliformes</taxon>
        <taxon>Anguillidae</taxon>
        <taxon>Anguilla</taxon>
    </lineage>
</organism>
<comment type="function">
    <text>Indispensable for the control of thyroid structure and metabolism. May play some role in the biological processes of the immature fishes.</text>
</comment>
<comment type="subunit">
    <text>Heterodimer of a common alpha chain and a unique beta chain which confers biological specificity to thyrotropin, lutropin, follitropin and gonadotropin.</text>
</comment>
<comment type="subcellular location">
    <subcellularLocation>
        <location>Secreted</location>
    </subcellularLocation>
</comment>
<comment type="similarity">
    <text evidence="4">Belongs to the glycoprotein hormones subunit beta family.</text>
</comment>
<reference key="1">
    <citation type="journal article" date="1993" name="C. R. Acad. Sci. III, Sci. Vie">
        <title>Cloning and sequence of thyrotropin beta subunit of a teleost fish: the eel (Anguilla anguilla L.).</title>
        <authorList>
            <person name="Salmon C."/>
            <person name="Marchelidon J."/>
            <person name="Fontaine Y.-A."/>
            <person name="Huet J.-C."/>
            <person name="Querat B."/>
        </authorList>
    </citation>
    <scope>NUCLEOTIDE SEQUENCE [MRNA]</scope>
</reference>
<reference key="2">
    <citation type="journal article" date="1991" name="C. R. Acad. Sci. III, Sci. Vie">
        <title>Purification and characterization of presumed thyrotropic hormone subunits of a teleost fish, the eel (Anguilla anguilla).</title>
        <authorList>
            <person name="Marchelidon J."/>
            <person name="Huet J.-C."/>
            <person name="Pernollet J.-C."/>
            <person name="Salmon C."/>
            <person name="Fontaine Y.-A."/>
        </authorList>
    </citation>
    <scope>PROTEIN SEQUENCE OF 21-43</scope>
</reference>
<evidence type="ECO:0000250" key="1"/>
<evidence type="ECO:0000255" key="2"/>
<evidence type="ECO:0000269" key="3">
    <source>
    </source>
</evidence>
<evidence type="ECO:0000305" key="4"/>
<accession>Q08127</accession>
<proteinExistence type="evidence at protein level"/>
<feature type="signal peptide" evidence="3">
    <location>
        <begin position="1"/>
        <end position="20"/>
    </location>
</feature>
<feature type="chain" id="PRO_0000011757" description="Thyrotropin subunit beta">
    <location>
        <begin position="21"/>
        <end position="147"/>
    </location>
</feature>
<feature type="glycosylation site" description="N-linked (GlcNAc...) asparagine" evidence="2">
    <location>
        <position position="43"/>
    </location>
</feature>
<feature type="disulfide bond" evidence="1">
    <location>
        <begin position="22"/>
        <end position="72"/>
    </location>
</feature>
<feature type="disulfide bond" evidence="1">
    <location>
        <begin position="36"/>
        <end position="87"/>
    </location>
</feature>
<feature type="disulfide bond" evidence="1">
    <location>
        <begin position="39"/>
        <end position="126"/>
    </location>
</feature>
<feature type="disulfide bond" evidence="1">
    <location>
        <begin position="47"/>
        <end position="103"/>
    </location>
</feature>
<feature type="disulfide bond" evidence="1">
    <location>
        <begin position="51"/>
        <end position="105"/>
    </location>
</feature>
<feature type="disulfide bond" evidence="1">
    <location>
        <begin position="108"/>
        <end position="115"/>
    </location>
</feature>